<proteinExistence type="inferred from homology"/>
<protein>
    <recommendedName>
        <fullName evidence="1">DNA-directed RNA polymerase subunit epsilon</fullName>
        <shortName evidence="1">RNAP epsilon subunit</shortName>
        <ecNumber evidence="1">2.7.7.6</ecNumber>
    </recommendedName>
    <alternativeName>
        <fullName evidence="1">RNA polymerase epsilon subunit</fullName>
    </alternativeName>
    <alternativeName>
        <fullName evidence="1">Transcriptase subunit epsilon</fullName>
    </alternativeName>
</protein>
<name>RPOY_LIMRD</name>
<sequence length="70" mass="8312">MTFKVYYQADKTKRPVRENTQSLYIEADSEAEALLMVEHNTDYNIEFVEQLDEKALAYEKQNPNFKLTTF</sequence>
<accession>A5VJ69</accession>
<reference key="1">
    <citation type="journal article" date="2011" name="PLoS Genet.">
        <title>The evolution of host specialization in the vertebrate gut symbiont Lactobacillus reuteri.</title>
        <authorList>
            <person name="Frese S.A."/>
            <person name="Benson A.K."/>
            <person name="Tannock G.W."/>
            <person name="Loach D.M."/>
            <person name="Kim J."/>
            <person name="Zhang M."/>
            <person name="Oh P.L."/>
            <person name="Heng N.C."/>
            <person name="Patil P.B."/>
            <person name="Juge N."/>
            <person name="Mackenzie D.A."/>
            <person name="Pearson B.M."/>
            <person name="Lapidus A."/>
            <person name="Dalin E."/>
            <person name="Tice H."/>
            <person name="Goltsman E."/>
            <person name="Land M."/>
            <person name="Hauser L."/>
            <person name="Ivanova N."/>
            <person name="Kyrpides N.C."/>
            <person name="Walter J."/>
        </authorList>
    </citation>
    <scope>NUCLEOTIDE SEQUENCE [LARGE SCALE GENOMIC DNA]</scope>
    <source>
        <strain>DSM 20016</strain>
    </source>
</reference>
<comment type="function">
    <text evidence="1">A non-essential component of RNA polymerase (RNAP).</text>
</comment>
<comment type="catalytic activity">
    <reaction evidence="1">
        <text>RNA(n) + a ribonucleoside 5'-triphosphate = RNA(n+1) + diphosphate</text>
        <dbReference type="Rhea" id="RHEA:21248"/>
        <dbReference type="Rhea" id="RHEA-COMP:14527"/>
        <dbReference type="Rhea" id="RHEA-COMP:17342"/>
        <dbReference type="ChEBI" id="CHEBI:33019"/>
        <dbReference type="ChEBI" id="CHEBI:61557"/>
        <dbReference type="ChEBI" id="CHEBI:140395"/>
        <dbReference type="EC" id="2.7.7.6"/>
    </reaction>
</comment>
<comment type="subunit">
    <text evidence="1">RNAP is composed of a core of 2 alpha, a beta and a beta' subunit. The core is associated with a delta subunit, and at least one of epsilon or omega. When a sigma factor is associated with the core the holoenzyme is formed, which can initiate transcription.</text>
</comment>
<comment type="similarity">
    <text evidence="1">Belongs to the RNA polymerase subunit epsilon family.</text>
</comment>
<organism>
    <name type="scientific">Limosilactobacillus reuteri (strain DSM 20016)</name>
    <name type="common">Lactobacillus reuteri</name>
    <dbReference type="NCBI Taxonomy" id="557436"/>
    <lineage>
        <taxon>Bacteria</taxon>
        <taxon>Bacillati</taxon>
        <taxon>Bacillota</taxon>
        <taxon>Bacilli</taxon>
        <taxon>Lactobacillales</taxon>
        <taxon>Lactobacillaceae</taxon>
        <taxon>Limosilactobacillus</taxon>
    </lineage>
</organism>
<feature type="chain" id="PRO_1000068872" description="DNA-directed RNA polymerase subunit epsilon">
    <location>
        <begin position="1"/>
        <end position="70"/>
    </location>
</feature>
<gene>
    <name evidence="1" type="primary">rpoY</name>
    <name type="ordered locus">Lreu_0628</name>
</gene>
<dbReference type="EC" id="2.7.7.6" evidence="1"/>
<dbReference type="EMBL" id="CP000705">
    <property type="protein sequence ID" value="ABQ82893.1"/>
    <property type="molecule type" value="Genomic_DNA"/>
</dbReference>
<dbReference type="RefSeq" id="WP_003666803.1">
    <property type="nucleotide sequence ID" value="NZ_AZDD01000002.1"/>
</dbReference>
<dbReference type="SMR" id="A5VJ69"/>
<dbReference type="STRING" id="557436.Lreu_0628"/>
<dbReference type="KEGG" id="lre:Lreu_0628"/>
<dbReference type="PATRIC" id="fig|557436.17.peg.700"/>
<dbReference type="eggNOG" id="COG5503">
    <property type="taxonomic scope" value="Bacteria"/>
</dbReference>
<dbReference type="HOGENOM" id="CLU_187518_0_0_9"/>
<dbReference type="Proteomes" id="UP000001991">
    <property type="component" value="Chromosome"/>
</dbReference>
<dbReference type="GO" id="GO:0000428">
    <property type="term" value="C:DNA-directed RNA polymerase complex"/>
    <property type="evidence" value="ECO:0007669"/>
    <property type="project" value="UniProtKB-KW"/>
</dbReference>
<dbReference type="GO" id="GO:0003677">
    <property type="term" value="F:DNA binding"/>
    <property type="evidence" value="ECO:0007669"/>
    <property type="project" value="UniProtKB-UniRule"/>
</dbReference>
<dbReference type="GO" id="GO:0003899">
    <property type="term" value="F:DNA-directed RNA polymerase activity"/>
    <property type="evidence" value="ECO:0007669"/>
    <property type="project" value="UniProtKB-UniRule"/>
</dbReference>
<dbReference type="GO" id="GO:0006351">
    <property type="term" value="P:DNA-templated transcription"/>
    <property type="evidence" value="ECO:0007669"/>
    <property type="project" value="UniProtKB-UniRule"/>
</dbReference>
<dbReference type="Gene3D" id="3.10.20.730">
    <property type="entry name" value="RNAP, epsilon subunit-like"/>
    <property type="match status" value="1"/>
</dbReference>
<dbReference type="HAMAP" id="MF_01553">
    <property type="entry name" value="RNApol_bact_RpoY"/>
    <property type="match status" value="1"/>
</dbReference>
<dbReference type="InterPro" id="IPR009907">
    <property type="entry name" value="RpoY"/>
</dbReference>
<dbReference type="NCBIfam" id="NF010188">
    <property type="entry name" value="PRK13667.1"/>
    <property type="match status" value="1"/>
</dbReference>
<dbReference type="Pfam" id="PF07288">
    <property type="entry name" value="RpoY"/>
    <property type="match status" value="1"/>
</dbReference>
<keyword id="KW-0240">DNA-directed RNA polymerase</keyword>
<keyword id="KW-0548">Nucleotidyltransferase</keyword>
<keyword id="KW-1185">Reference proteome</keyword>
<keyword id="KW-0804">Transcription</keyword>
<keyword id="KW-0808">Transferase</keyword>
<evidence type="ECO:0000255" key="1">
    <source>
        <dbReference type="HAMAP-Rule" id="MF_01553"/>
    </source>
</evidence>